<evidence type="ECO:0000269" key="1">
    <source ref="2"/>
</evidence>
<evidence type="ECO:0000305" key="2"/>
<keyword id="KW-0998">Cell outer membrane</keyword>
<keyword id="KW-0903">Direct protein sequencing</keyword>
<keyword id="KW-0472">Membrane</keyword>
<keyword id="KW-1185">Reference proteome</keyword>
<keyword id="KW-0732">Signal</keyword>
<keyword id="KW-0812">Transmembrane</keyword>
<keyword id="KW-1134">Transmembrane beta strand</keyword>
<comment type="subcellular location">
    <subcellularLocation>
        <location>Cell outer membrane</location>
        <topology>Multi-pass membrane protein</topology>
    </subcellularLocation>
</comment>
<comment type="similarity">
    <text evidence="2">Belongs to the OmpP1/FadL family.</text>
</comment>
<comment type="sequence caution" evidence="2">
    <conflict type="erroneous initiation">
        <sequence resource="EMBL-CDS" id="AAK03153"/>
    </conflict>
</comment>
<accession>P80603</accession>
<accession>Q9CLY0</accession>
<proteinExistence type="evidence at protein level"/>
<name>OMP47_PASMU</name>
<gene>
    <name type="ordered locus">PM1069</name>
</gene>
<organism>
    <name type="scientific">Pasteurella multocida (strain Pm70)</name>
    <dbReference type="NCBI Taxonomy" id="272843"/>
    <lineage>
        <taxon>Bacteria</taxon>
        <taxon>Pseudomonadati</taxon>
        <taxon>Pseudomonadota</taxon>
        <taxon>Gammaproteobacteria</taxon>
        <taxon>Pasteurellales</taxon>
        <taxon>Pasteurellaceae</taxon>
        <taxon>Pasteurella</taxon>
    </lineage>
</organism>
<reference key="1">
    <citation type="journal article" date="2001" name="Proc. Natl. Acad. Sci. U.S.A.">
        <title>Complete genomic sequence of Pasteurella multocida Pm70.</title>
        <authorList>
            <person name="May B.J."/>
            <person name="Zhang Q."/>
            <person name="Li L.L."/>
            <person name="Paustian M.L."/>
            <person name="Whittam T.S."/>
            <person name="Kapur V."/>
        </authorList>
    </citation>
    <scope>NUCLEOTIDE SEQUENCE [LARGE SCALE GENOMIC DNA]</scope>
    <source>
        <strain>Pm70</strain>
    </source>
</reference>
<reference key="2">
    <citation type="submission" date="1996-05" db="UniProtKB">
        <authorList>
            <person name="Hartmann L."/>
        </authorList>
    </citation>
    <scope>PROTEIN SEQUENCE OF 26-44</scope>
    <source>
        <strain>A225</strain>
    </source>
</reference>
<protein>
    <recommendedName>
        <fullName>47 kDa outer membrane protein</fullName>
    </recommendedName>
</protein>
<sequence length="428" mass="46061">MAKTSKFTQTLLASALAVVAGSASAAAFQLAEVSTSGLGRAYAGEAAIADNAAVVATNPALMSLLKQPEISVGAIYVDPNINLTSPMPGFAYKNIAPNALVPTVYGVYPINEKFAVGGGLNVNYGLATEFDDKYAGGFLGGKTDLTAINFNLSGAYRVTEKFSVGLGLNAVHAKAKLERYAGVALKLKVPNVAQLAALPANTVISKLQGDKWGFGWNAGLVYEFNERNRIGIAYHSQVDINFKGQYSNHFPLAAAALLQTKGITATGGKEIPGTLHLPLPAYWEISGYHKMTDRFAMHYSYKYTQWSKFKELRAKGTDGKTLFSKTEEFRDSSRIALGASYDVTDALTVRTGIAYDESAADEHNTISIPDTDRTWFSVGATYRFTPNVSIDAGFAHLKGKKNTFKEEGVPFTSKASANLYGLNVNYRF</sequence>
<feature type="signal peptide" evidence="1">
    <location>
        <begin position="1"/>
        <end position="25"/>
    </location>
</feature>
<feature type="chain" id="PRO_0000025201" description="47 kDa outer membrane protein">
    <location>
        <begin position="26"/>
        <end position="428"/>
    </location>
</feature>
<dbReference type="EMBL" id="AE004439">
    <property type="protein sequence ID" value="AAK03153.1"/>
    <property type="status" value="ALT_INIT"/>
    <property type="molecule type" value="Genomic_DNA"/>
</dbReference>
<dbReference type="RefSeq" id="WP_016533696.1">
    <property type="nucleotide sequence ID" value="NC_002663.1"/>
</dbReference>
<dbReference type="SMR" id="P80603"/>
<dbReference type="IntAct" id="P80603">
    <property type="interactions" value="1"/>
</dbReference>
<dbReference type="STRING" id="272843.PM1069"/>
<dbReference type="EnsemblBacteria" id="AAK03153">
    <property type="protein sequence ID" value="AAK03153"/>
    <property type="gene ID" value="PM1069"/>
</dbReference>
<dbReference type="KEGG" id="pmu:PM1069"/>
<dbReference type="PATRIC" id="fig|272843.6.peg.1083"/>
<dbReference type="HOGENOM" id="CLU_035981_0_0_6"/>
<dbReference type="OrthoDB" id="19849at2"/>
<dbReference type="Proteomes" id="UP000000809">
    <property type="component" value="Chromosome"/>
</dbReference>
<dbReference type="GO" id="GO:0009279">
    <property type="term" value="C:cell outer membrane"/>
    <property type="evidence" value="ECO:0007669"/>
    <property type="project" value="UniProtKB-SubCell"/>
</dbReference>
<dbReference type="GO" id="GO:0015483">
    <property type="term" value="F:long-chain fatty acid transporting porin activity"/>
    <property type="evidence" value="ECO:0007669"/>
    <property type="project" value="TreeGrafter"/>
</dbReference>
<dbReference type="Gene3D" id="2.40.160.60">
    <property type="entry name" value="Outer membrane protein transport protein (OMPP1/FadL/TodX)"/>
    <property type="match status" value="1"/>
</dbReference>
<dbReference type="InterPro" id="IPR005017">
    <property type="entry name" value="OMPP1/FadL/TodX"/>
</dbReference>
<dbReference type="PANTHER" id="PTHR35093:SF3">
    <property type="entry name" value="LONG-CHAIN FATTY ACID TRANSPORT PROTEIN"/>
    <property type="match status" value="1"/>
</dbReference>
<dbReference type="PANTHER" id="PTHR35093">
    <property type="entry name" value="OUTER MEMBRANE PROTEIN NMB0088-RELATED"/>
    <property type="match status" value="1"/>
</dbReference>
<dbReference type="Pfam" id="PF03349">
    <property type="entry name" value="Toluene_X"/>
    <property type="match status" value="1"/>
</dbReference>
<dbReference type="SUPFAM" id="SSF56935">
    <property type="entry name" value="Porins"/>
    <property type="match status" value="1"/>
</dbReference>